<organism>
    <name type="scientific">Burkholderia thailandensis (strain ATCC 700388 / DSM 13276 / CCUG 48851 / CIP 106301 / E264)</name>
    <dbReference type="NCBI Taxonomy" id="271848"/>
    <lineage>
        <taxon>Bacteria</taxon>
        <taxon>Pseudomonadati</taxon>
        <taxon>Pseudomonadota</taxon>
        <taxon>Betaproteobacteria</taxon>
        <taxon>Burkholderiales</taxon>
        <taxon>Burkholderiaceae</taxon>
        <taxon>Burkholderia</taxon>
        <taxon>pseudomallei group</taxon>
    </lineage>
</organism>
<comment type="function">
    <text evidence="1">One of the primary rRNA binding proteins. Required for association of the 30S and 50S subunits to form the 70S ribosome, for tRNA binding and peptide bond formation. It has been suggested to have peptidyltransferase activity; this is somewhat controversial. Makes several contacts with the 16S rRNA in the 70S ribosome.</text>
</comment>
<comment type="subunit">
    <text evidence="1">Part of the 50S ribosomal subunit. Forms a bridge to the 30S subunit in the 70S ribosome.</text>
</comment>
<comment type="similarity">
    <text evidence="1">Belongs to the universal ribosomal protein uL2 family.</text>
</comment>
<name>RL2_BURTA</name>
<protein>
    <recommendedName>
        <fullName evidence="1">Large ribosomal subunit protein uL2</fullName>
    </recommendedName>
    <alternativeName>
        <fullName evidence="3">50S ribosomal protein L2</fullName>
    </alternativeName>
</protein>
<evidence type="ECO:0000255" key="1">
    <source>
        <dbReference type="HAMAP-Rule" id="MF_01320"/>
    </source>
</evidence>
<evidence type="ECO:0000256" key="2">
    <source>
        <dbReference type="SAM" id="MobiDB-lite"/>
    </source>
</evidence>
<evidence type="ECO:0000305" key="3"/>
<reference key="1">
    <citation type="journal article" date="2005" name="BMC Genomics">
        <title>Bacterial genome adaptation to niches: divergence of the potential virulence genes in three Burkholderia species of different survival strategies.</title>
        <authorList>
            <person name="Kim H.S."/>
            <person name="Schell M.A."/>
            <person name="Yu Y."/>
            <person name="Ulrich R.L."/>
            <person name="Sarria S.H."/>
            <person name="Nierman W.C."/>
            <person name="DeShazer D."/>
        </authorList>
    </citation>
    <scope>NUCLEOTIDE SEQUENCE [LARGE SCALE GENOMIC DNA]</scope>
    <source>
        <strain>ATCC 700388 / DSM 13276 / CCUG 48851 / CIP 106301 / E264</strain>
    </source>
</reference>
<accession>Q2SU30</accession>
<proteinExistence type="inferred from homology"/>
<sequence length="275" mass="30280">MAIVKVKPTSPGRRAMVKVVNKDLHKGKPHAALLDTQNSKAGRNNNGRITTRHQGGGHKHHYRVIDFRRTKDGIPAKVERLEYDPNRSANIALVLYADGERRYIIAPKGVTVGQQLMSGSEAPIRAGNTLPIRNIPVGTTIHCIEMLPGKGAQMARSAGTSAMLLAREGVYAQVRLRSGEIRRVHIECRATIGEVGNEEHSLRQIGKAGANRWRGIRPTVRGVAMNPIDHPHGGGEGRTAAGRDPVSPWGTPTKGFRTRRNKRTTTMIVQRRHKR</sequence>
<dbReference type="EMBL" id="CP000086">
    <property type="protein sequence ID" value="ABC39333.1"/>
    <property type="molecule type" value="Genomic_DNA"/>
</dbReference>
<dbReference type="RefSeq" id="WP_009888363.1">
    <property type="nucleotide sequence ID" value="NZ_CP008786.1"/>
</dbReference>
<dbReference type="SMR" id="Q2SU30"/>
<dbReference type="GeneID" id="45122753"/>
<dbReference type="KEGG" id="bte:BTH_I3065"/>
<dbReference type="HOGENOM" id="CLU_036235_2_1_4"/>
<dbReference type="Proteomes" id="UP000001930">
    <property type="component" value="Chromosome I"/>
</dbReference>
<dbReference type="GO" id="GO:0015934">
    <property type="term" value="C:large ribosomal subunit"/>
    <property type="evidence" value="ECO:0007669"/>
    <property type="project" value="InterPro"/>
</dbReference>
<dbReference type="GO" id="GO:0019843">
    <property type="term" value="F:rRNA binding"/>
    <property type="evidence" value="ECO:0007669"/>
    <property type="project" value="UniProtKB-UniRule"/>
</dbReference>
<dbReference type="GO" id="GO:0003735">
    <property type="term" value="F:structural constituent of ribosome"/>
    <property type="evidence" value="ECO:0007669"/>
    <property type="project" value="InterPro"/>
</dbReference>
<dbReference type="GO" id="GO:0016740">
    <property type="term" value="F:transferase activity"/>
    <property type="evidence" value="ECO:0007669"/>
    <property type="project" value="InterPro"/>
</dbReference>
<dbReference type="GO" id="GO:0002181">
    <property type="term" value="P:cytoplasmic translation"/>
    <property type="evidence" value="ECO:0007669"/>
    <property type="project" value="TreeGrafter"/>
</dbReference>
<dbReference type="FunFam" id="2.30.30.30:FF:000001">
    <property type="entry name" value="50S ribosomal protein L2"/>
    <property type="match status" value="1"/>
</dbReference>
<dbReference type="FunFam" id="2.40.50.140:FF:000003">
    <property type="entry name" value="50S ribosomal protein L2"/>
    <property type="match status" value="1"/>
</dbReference>
<dbReference type="FunFam" id="4.10.950.10:FF:000001">
    <property type="entry name" value="50S ribosomal protein L2"/>
    <property type="match status" value="1"/>
</dbReference>
<dbReference type="Gene3D" id="2.30.30.30">
    <property type="match status" value="1"/>
</dbReference>
<dbReference type="Gene3D" id="2.40.50.140">
    <property type="entry name" value="Nucleic acid-binding proteins"/>
    <property type="match status" value="1"/>
</dbReference>
<dbReference type="Gene3D" id="4.10.950.10">
    <property type="entry name" value="Ribosomal protein L2, domain 3"/>
    <property type="match status" value="1"/>
</dbReference>
<dbReference type="HAMAP" id="MF_01320_B">
    <property type="entry name" value="Ribosomal_uL2_B"/>
    <property type="match status" value="1"/>
</dbReference>
<dbReference type="InterPro" id="IPR012340">
    <property type="entry name" value="NA-bd_OB-fold"/>
</dbReference>
<dbReference type="InterPro" id="IPR014722">
    <property type="entry name" value="Rib_uL2_dom2"/>
</dbReference>
<dbReference type="InterPro" id="IPR002171">
    <property type="entry name" value="Ribosomal_uL2"/>
</dbReference>
<dbReference type="InterPro" id="IPR005880">
    <property type="entry name" value="Ribosomal_uL2_bac/org-type"/>
</dbReference>
<dbReference type="InterPro" id="IPR022669">
    <property type="entry name" value="Ribosomal_uL2_C"/>
</dbReference>
<dbReference type="InterPro" id="IPR022671">
    <property type="entry name" value="Ribosomal_uL2_CS"/>
</dbReference>
<dbReference type="InterPro" id="IPR014726">
    <property type="entry name" value="Ribosomal_uL2_dom3"/>
</dbReference>
<dbReference type="InterPro" id="IPR022666">
    <property type="entry name" value="Ribosomal_uL2_RNA-bd_dom"/>
</dbReference>
<dbReference type="InterPro" id="IPR008991">
    <property type="entry name" value="Translation_prot_SH3-like_sf"/>
</dbReference>
<dbReference type="NCBIfam" id="TIGR01171">
    <property type="entry name" value="rplB_bact"/>
    <property type="match status" value="1"/>
</dbReference>
<dbReference type="PANTHER" id="PTHR13691:SF5">
    <property type="entry name" value="LARGE RIBOSOMAL SUBUNIT PROTEIN UL2M"/>
    <property type="match status" value="1"/>
</dbReference>
<dbReference type="PANTHER" id="PTHR13691">
    <property type="entry name" value="RIBOSOMAL PROTEIN L2"/>
    <property type="match status" value="1"/>
</dbReference>
<dbReference type="Pfam" id="PF00181">
    <property type="entry name" value="Ribosomal_L2"/>
    <property type="match status" value="1"/>
</dbReference>
<dbReference type="Pfam" id="PF03947">
    <property type="entry name" value="Ribosomal_L2_C"/>
    <property type="match status" value="1"/>
</dbReference>
<dbReference type="PIRSF" id="PIRSF002158">
    <property type="entry name" value="Ribosomal_L2"/>
    <property type="match status" value="1"/>
</dbReference>
<dbReference type="SMART" id="SM01383">
    <property type="entry name" value="Ribosomal_L2"/>
    <property type="match status" value="1"/>
</dbReference>
<dbReference type="SMART" id="SM01382">
    <property type="entry name" value="Ribosomal_L2_C"/>
    <property type="match status" value="1"/>
</dbReference>
<dbReference type="SUPFAM" id="SSF50249">
    <property type="entry name" value="Nucleic acid-binding proteins"/>
    <property type="match status" value="1"/>
</dbReference>
<dbReference type="SUPFAM" id="SSF50104">
    <property type="entry name" value="Translation proteins SH3-like domain"/>
    <property type="match status" value="1"/>
</dbReference>
<dbReference type="PROSITE" id="PS00467">
    <property type="entry name" value="RIBOSOMAL_L2"/>
    <property type="match status" value="1"/>
</dbReference>
<feature type="chain" id="PRO_0000237168" description="Large ribosomal subunit protein uL2">
    <location>
        <begin position="1"/>
        <end position="275"/>
    </location>
</feature>
<feature type="region of interest" description="Disordered" evidence="2">
    <location>
        <begin position="38"/>
        <end position="59"/>
    </location>
</feature>
<feature type="region of interest" description="Disordered" evidence="2">
    <location>
        <begin position="224"/>
        <end position="257"/>
    </location>
</feature>
<feature type="compositionally biased region" description="Polar residues" evidence="2">
    <location>
        <begin position="38"/>
        <end position="53"/>
    </location>
</feature>
<keyword id="KW-0687">Ribonucleoprotein</keyword>
<keyword id="KW-0689">Ribosomal protein</keyword>
<keyword id="KW-0694">RNA-binding</keyword>
<keyword id="KW-0699">rRNA-binding</keyword>
<gene>
    <name evidence="1" type="primary">rplB</name>
    <name type="ordered locus">BTH_I3065</name>
</gene>